<organism>
    <name type="scientific">Bacillus cereus (strain AH820)</name>
    <dbReference type="NCBI Taxonomy" id="405535"/>
    <lineage>
        <taxon>Bacteria</taxon>
        <taxon>Bacillati</taxon>
        <taxon>Bacillota</taxon>
        <taxon>Bacilli</taxon>
        <taxon>Bacillales</taxon>
        <taxon>Bacillaceae</taxon>
        <taxon>Bacillus</taxon>
        <taxon>Bacillus cereus group</taxon>
    </lineage>
</organism>
<gene>
    <name evidence="1" type="primary">pcp</name>
    <name type="ordered locus">BCAH820_3096</name>
</gene>
<dbReference type="EC" id="3.4.19.3" evidence="1"/>
<dbReference type="EMBL" id="CP001283">
    <property type="protein sequence ID" value="ACK87438.1"/>
    <property type="molecule type" value="Genomic_DNA"/>
</dbReference>
<dbReference type="RefSeq" id="WP_000859730.1">
    <property type="nucleotide sequence ID" value="NC_011773.1"/>
</dbReference>
<dbReference type="SMR" id="B7JDC3"/>
<dbReference type="MEROPS" id="C15.001"/>
<dbReference type="KEGG" id="bcu:BCAH820_3096"/>
<dbReference type="HOGENOM" id="CLU_043960_4_0_9"/>
<dbReference type="Proteomes" id="UP000001363">
    <property type="component" value="Chromosome"/>
</dbReference>
<dbReference type="GO" id="GO:0005829">
    <property type="term" value="C:cytosol"/>
    <property type="evidence" value="ECO:0007669"/>
    <property type="project" value="InterPro"/>
</dbReference>
<dbReference type="GO" id="GO:0016920">
    <property type="term" value="F:pyroglutamyl-peptidase activity"/>
    <property type="evidence" value="ECO:0007669"/>
    <property type="project" value="UniProtKB-UniRule"/>
</dbReference>
<dbReference type="GO" id="GO:0006508">
    <property type="term" value="P:proteolysis"/>
    <property type="evidence" value="ECO:0007669"/>
    <property type="project" value="UniProtKB-KW"/>
</dbReference>
<dbReference type="CDD" id="cd00501">
    <property type="entry name" value="Peptidase_C15"/>
    <property type="match status" value="1"/>
</dbReference>
<dbReference type="FunFam" id="3.40.630.20:FF:000001">
    <property type="entry name" value="Pyrrolidone-carboxylate peptidase"/>
    <property type="match status" value="1"/>
</dbReference>
<dbReference type="Gene3D" id="3.40.630.20">
    <property type="entry name" value="Peptidase C15, pyroglutamyl peptidase I-like"/>
    <property type="match status" value="1"/>
</dbReference>
<dbReference type="HAMAP" id="MF_00417">
    <property type="entry name" value="Pyrrolid_peptidase"/>
    <property type="match status" value="1"/>
</dbReference>
<dbReference type="InterPro" id="IPR000816">
    <property type="entry name" value="Peptidase_C15"/>
</dbReference>
<dbReference type="InterPro" id="IPR016125">
    <property type="entry name" value="Peptidase_C15-like"/>
</dbReference>
<dbReference type="InterPro" id="IPR036440">
    <property type="entry name" value="Peptidase_C15-like_sf"/>
</dbReference>
<dbReference type="InterPro" id="IPR029762">
    <property type="entry name" value="PGP-I_bact-type"/>
</dbReference>
<dbReference type="InterPro" id="IPR033694">
    <property type="entry name" value="PGPEP1_Cys_AS"/>
</dbReference>
<dbReference type="InterPro" id="IPR033693">
    <property type="entry name" value="PGPEP1_Glu_AS"/>
</dbReference>
<dbReference type="NCBIfam" id="NF009676">
    <property type="entry name" value="PRK13197.1"/>
    <property type="match status" value="1"/>
</dbReference>
<dbReference type="NCBIfam" id="TIGR00504">
    <property type="entry name" value="pyro_pdase"/>
    <property type="match status" value="1"/>
</dbReference>
<dbReference type="PANTHER" id="PTHR23402">
    <property type="entry name" value="PROTEASE FAMILY C15 PYROGLUTAMYL-PEPTIDASE I-RELATED"/>
    <property type="match status" value="1"/>
</dbReference>
<dbReference type="PANTHER" id="PTHR23402:SF1">
    <property type="entry name" value="PYROGLUTAMYL-PEPTIDASE I"/>
    <property type="match status" value="1"/>
</dbReference>
<dbReference type="Pfam" id="PF01470">
    <property type="entry name" value="Peptidase_C15"/>
    <property type="match status" value="1"/>
</dbReference>
<dbReference type="PIRSF" id="PIRSF015592">
    <property type="entry name" value="Prld-crbxl_pptds"/>
    <property type="match status" value="1"/>
</dbReference>
<dbReference type="PRINTS" id="PR00706">
    <property type="entry name" value="PYROGLUPTASE"/>
</dbReference>
<dbReference type="SUPFAM" id="SSF53182">
    <property type="entry name" value="Pyrrolidone carboxyl peptidase (pyroglutamate aminopeptidase)"/>
    <property type="match status" value="1"/>
</dbReference>
<dbReference type="PROSITE" id="PS01334">
    <property type="entry name" value="PYRASE_CYS"/>
    <property type="match status" value="1"/>
</dbReference>
<dbReference type="PROSITE" id="PS01333">
    <property type="entry name" value="PYRASE_GLU"/>
    <property type="match status" value="1"/>
</dbReference>
<name>PCP_BACC0</name>
<reference key="1">
    <citation type="submission" date="2008-10" db="EMBL/GenBank/DDBJ databases">
        <title>Genome sequence of Bacillus cereus AH820.</title>
        <authorList>
            <person name="Dodson R.J."/>
            <person name="Durkin A.S."/>
            <person name="Rosovitz M.J."/>
            <person name="Rasko D.A."/>
            <person name="Hoffmaster A."/>
            <person name="Ravel J."/>
            <person name="Sutton G."/>
        </authorList>
    </citation>
    <scope>NUCLEOTIDE SEQUENCE [LARGE SCALE GENOMIC DNA]</scope>
    <source>
        <strain>AH820</strain>
    </source>
</reference>
<feature type="chain" id="PRO_1000123986" description="Pyrrolidone-carboxylate peptidase">
    <location>
        <begin position="1"/>
        <end position="215"/>
    </location>
</feature>
<feature type="active site" evidence="1">
    <location>
        <position position="80"/>
    </location>
</feature>
<feature type="active site" evidence="1">
    <location>
        <position position="143"/>
    </location>
</feature>
<feature type="active site" evidence="1">
    <location>
        <position position="167"/>
    </location>
</feature>
<proteinExistence type="inferred from homology"/>
<sequence length="215" mass="23453">MKTVLLTGFDPFGGESINPAWEVAKSLHEKTIGEYKIISKQVPTVFHKSISVLKEYIEELAPECIICIGQAGGRPDITIERVAINIDDARIADNEGNQPVDVPVVEEGPAAYWSTLPMKAIVKKLQEEGIPASVSQTAGTFVCNHLFYGLMHELEKHDTKMKGGFIHIPFLPEQASNYPGQPSMSLSTIRKGIELAVEVTTTVEVDIVEIGGATH</sequence>
<protein>
    <recommendedName>
        <fullName evidence="1">Pyrrolidone-carboxylate peptidase</fullName>
        <ecNumber evidence="1">3.4.19.3</ecNumber>
    </recommendedName>
    <alternativeName>
        <fullName evidence="1">5-oxoprolyl-peptidase</fullName>
    </alternativeName>
    <alternativeName>
        <fullName evidence="1">Pyroglutamyl-peptidase I</fullName>
        <shortName evidence="1">PGP-I</shortName>
        <shortName evidence="1">Pyrase</shortName>
    </alternativeName>
</protein>
<accession>B7JDC3</accession>
<evidence type="ECO:0000255" key="1">
    <source>
        <dbReference type="HAMAP-Rule" id="MF_00417"/>
    </source>
</evidence>
<keyword id="KW-0963">Cytoplasm</keyword>
<keyword id="KW-0378">Hydrolase</keyword>
<keyword id="KW-0645">Protease</keyword>
<keyword id="KW-0788">Thiol protease</keyword>
<comment type="function">
    <text evidence="1">Removes 5-oxoproline from various penultimate amino acid residues except L-proline.</text>
</comment>
<comment type="catalytic activity">
    <reaction evidence="1">
        <text>Release of an N-terminal pyroglutamyl group from a polypeptide, the second amino acid generally not being Pro.</text>
        <dbReference type="EC" id="3.4.19.3"/>
    </reaction>
</comment>
<comment type="subunit">
    <text evidence="1">Homotetramer.</text>
</comment>
<comment type="subcellular location">
    <subcellularLocation>
        <location evidence="1">Cytoplasm</location>
    </subcellularLocation>
</comment>
<comment type="similarity">
    <text evidence="1">Belongs to the peptidase C15 family.</text>
</comment>